<name>PRXC_CURIN</name>
<dbReference type="EC" id="1.11.1.10" evidence="2"/>
<dbReference type="EMBL" id="X85369">
    <property type="protein sequence ID" value="CAA59686.1"/>
    <property type="molecule type" value="mRNA"/>
</dbReference>
<dbReference type="PIR" id="S69334">
    <property type="entry name" value="S69334"/>
</dbReference>
<dbReference type="PDB" id="1IDQ">
    <property type="method" value="X-ray"/>
    <property type="resolution" value="2.03 A"/>
    <property type="chains" value="A=1-609"/>
</dbReference>
<dbReference type="PDB" id="1IDU">
    <property type="method" value="X-ray"/>
    <property type="resolution" value="2.24 A"/>
    <property type="chains" value="A=1-609"/>
</dbReference>
<dbReference type="PDB" id="1VNC">
    <property type="method" value="X-ray"/>
    <property type="resolution" value="2.10 A"/>
    <property type="chains" value="A=1-609"/>
</dbReference>
<dbReference type="PDB" id="1VNE">
    <property type="method" value="X-ray"/>
    <property type="resolution" value="2.15 A"/>
    <property type="chains" value="A=1-609"/>
</dbReference>
<dbReference type="PDB" id="1VNF">
    <property type="method" value="X-ray"/>
    <property type="resolution" value="2.35 A"/>
    <property type="chains" value="A=1-609"/>
</dbReference>
<dbReference type="PDB" id="1VNG">
    <property type="method" value="X-ray"/>
    <property type="resolution" value="2.20 A"/>
    <property type="chains" value="A=1-609"/>
</dbReference>
<dbReference type="PDB" id="1VNH">
    <property type="method" value="X-ray"/>
    <property type="resolution" value="2.11 A"/>
    <property type="chains" value="A=1-609"/>
</dbReference>
<dbReference type="PDB" id="1VNI">
    <property type="method" value="X-ray"/>
    <property type="resolution" value="2.15 A"/>
    <property type="chains" value="A=1-609"/>
</dbReference>
<dbReference type="PDB" id="1VNS">
    <property type="method" value="X-ray"/>
    <property type="resolution" value="1.66 A"/>
    <property type="chains" value="A=1-609"/>
</dbReference>
<dbReference type="PDB" id="3BB0">
    <property type="method" value="X-ray"/>
    <property type="resolution" value="1.50 A"/>
    <property type="chains" value="A=1-609"/>
</dbReference>
<dbReference type="PDBsum" id="1IDQ"/>
<dbReference type="PDBsum" id="1IDU"/>
<dbReference type="PDBsum" id="1VNC"/>
<dbReference type="PDBsum" id="1VNE"/>
<dbReference type="PDBsum" id="1VNF"/>
<dbReference type="PDBsum" id="1VNG"/>
<dbReference type="PDBsum" id="1VNH"/>
<dbReference type="PDBsum" id="1VNI"/>
<dbReference type="PDBsum" id="1VNS"/>
<dbReference type="PDBsum" id="3BB0"/>
<dbReference type="SMR" id="P49053"/>
<dbReference type="PeroxiBase" id="5892">
    <property type="entry name" value="CinaVCPo"/>
</dbReference>
<dbReference type="KEGG" id="ag:CAA59686"/>
<dbReference type="BioCyc" id="MetaCyc:MONOMER-15997"/>
<dbReference type="BRENDA" id="1.11.1.B2">
    <property type="organism ID" value="1761"/>
</dbReference>
<dbReference type="SABIO-RK" id="P49053"/>
<dbReference type="EvolutionaryTrace" id="P49053"/>
<dbReference type="GO" id="GO:0005576">
    <property type="term" value="C:extracellular region"/>
    <property type="evidence" value="ECO:0007669"/>
    <property type="project" value="UniProtKB-SubCell"/>
</dbReference>
<dbReference type="GO" id="GO:0016691">
    <property type="term" value="F:chloride peroxidase activity"/>
    <property type="evidence" value="ECO:0007669"/>
    <property type="project" value="UniProtKB-EC"/>
</dbReference>
<dbReference type="GO" id="GO:0046872">
    <property type="term" value="F:metal ion binding"/>
    <property type="evidence" value="ECO:0007669"/>
    <property type="project" value="UniProtKB-KW"/>
</dbReference>
<dbReference type="CDD" id="cd03398">
    <property type="entry name" value="PAP2_haloperoxidase"/>
    <property type="match status" value="1"/>
</dbReference>
<dbReference type="Gene3D" id="1.20.144.10">
    <property type="entry name" value="Phosphatidic acid phosphatase type 2/haloperoxidase"/>
    <property type="match status" value="1"/>
</dbReference>
<dbReference type="Gene3D" id="1.10.606.10">
    <property type="entry name" value="Vanadium-containing Chloroperoxidase, domain 2"/>
    <property type="match status" value="1"/>
</dbReference>
<dbReference type="InterPro" id="IPR016119">
    <property type="entry name" value="Br/Cl_peroxidase_C"/>
</dbReference>
<dbReference type="InterPro" id="IPR036938">
    <property type="entry name" value="P_Acid_Pase_2/haloperoxi_sf"/>
</dbReference>
<dbReference type="InterPro" id="IPR052559">
    <property type="entry name" value="V-haloperoxidase"/>
</dbReference>
<dbReference type="InterPro" id="IPR041067">
    <property type="entry name" value="VCPO_N"/>
</dbReference>
<dbReference type="PANTHER" id="PTHR34599">
    <property type="entry name" value="PEROXIDASE-RELATED"/>
    <property type="match status" value="1"/>
</dbReference>
<dbReference type="PANTHER" id="PTHR34599:SF1">
    <property type="entry name" value="PHOSPHATIDIC ACID PHOSPHATASE TYPE 2_HALOPEROXIDASE DOMAIN-CONTAINING PROTEIN"/>
    <property type="match status" value="1"/>
</dbReference>
<dbReference type="Pfam" id="PF17897">
    <property type="entry name" value="VCPO_N"/>
    <property type="match status" value="1"/>
</dbReference>
<dbReference type="SUPFAM" id="SSF48317">
    <property type="entry name" value="Acid phosphatase/Vanadium-dependent haloperoxidase"/>
    <property type="match status" value="1"/>
</dbReference>
<accession>P49053</accession>
<proteinExistence type="evidence at protein level"/>
<feature type="chain" id="PRO_0000097055" description="Vanadium chloroperoxidase">
    <location>
        <begin position="1"/>
        <end position="609"/>
    </location>
</feature>
<feature type="region of interest" description="Disordered" evidence="1">
    <location>
        <begin position="569"/>
        <end position="609"/>
    </location>
</feature>
<feature type="active site" description="Proton donor" evidence="8">
    <location>
        <position position="404"/>
    </location>
</feature>
<feature type="binding site" evidence="3 4 9 11">
    <location>
        <position position="353"/>
    </location>
    <ligand>
        <name>vanadate</name>
        <dbReference type="ChEBI" id="CHEBI:35169"/>
    </ligand>
</feature>
<feature type="binding site" evidence="3 4 9 11">
    <location>
        <position position="360"/>
    </location>
    <ligand>
        <name>vanadate</name>
        <dbReference type="ChEBI" id="CHEBI:35169"/>
    </ligand>
</feature>
<feature type="binding site" evidence="3 4 9 11">
    <location>
        <position position="402"/>
    </location>
    <ligand>
        <name>vanadate</name>
        <dbReference type="ChEBI" id="CHEBI:35169"/>
    </ligand>
</feature>
<feature type="binding site" evidence="3 4 9 11">
    <location>
        <position position="403"/>
    </location>
    <ligand>
        <name>vanadate</name>
        <dbReference type="ChEBI" id="CHEBI:35169"/>
    </ligand>
</feature>
<feature type="binding site" evidence="3 4 9 11">
    <location>
        <position position="404"/>
    </location>
    <ligand>
        <name>vanadate</name>
        <dbReference type="ChEBI" id="CHEBI:35169"/>
    </ligand>
</feature>
<feature type="binding site" evidence="3 4 9 11">
    <location>
        <position position="490"/>
    </location>
    <ligand>
        <name>vanadate</name>
        <dbReference type="ChEBI" id="CHEBI:35169"/>
    </ligand>
</feature>
<feature type="binding site" evidence="3 4 9 11">
    <location>
        <position position="496"/>
    </location>
    <ligand>
        <name>vanadate</name>
        <dbReference type="ChEBI" id="CHEBI:35169"/>
    </ligand>
</feature>
<feature type="sequence conflict" description="In Ref. 1; AA sequence." evidence="6" ref="1">
    <original>P</original>
    <variation>S</variation>
    <location>
        <position position="454"/>
    </location>
</feature>
<feature type="helix" evidence="14">
    <location>
        <begin position="16"/>
        <end position="20"/>
    </location>
</feature>
<feature type="helix" evidence="14">
    <location>
        <begin position="22"/>
        <end position="40"/>
    </location>
</feature>
<feature type="helix" evidence="14">
    <location>
        <begin position="47"/>
        <end position="68"/>
    </location>
</feature>
<feature type="strand" evidence="14">
    <location>
        <begin position="72"/>
        <end position="74"/>
    </location>
</feature>
<feature type="strand" evidence="14">
    <location>
        <begin position="77"/>
        <end position="79"/>
    </location>
</feature>
<feature type="helix" evidence="14">
    <location>
        <begin position="85"/>
        <end position="87"/>
    </location>
</feature>
<feature type="helix" evidence="14">
    <location>
        <begin position="98"/>
        <end position="114"/>
    </location>
</feature>
<feature type="turn" evidence="13">
    <location>
        <begin position="118"/>
        <end position="125"/>
    </location>
</feature>
<feature type="helix" evidence="14">
    <location>
        <begin position="131"/>
        <end position="147"/>
    </location>
</feature>
<feature type="helix" evidence="14">
    <location>
        <begin position="157"/>
        <end position="173"/>
    </location>
</feature>
<feature type="turn" evidence="14">
    <location>
        <begin position="176"/>
        <end position="179"/>
    </location>
</feature>
<feature type="strand" evidence="14">
    <location>
        <begin position="202"/>
        <end position="207"/>
    </location>
</feature>
<feature type="strand" evidence="14">
    <location>
        <begin position="215"/>
        <end position="218"/>
    </location>
</feature>
<feature type="helix" evidence="14">
    <location>
        <begin position="226"/>
        <end position="229"/>
    </location>
</feature>
<feature type="helix" evidence="14">
    <location>
        <begin position="248"/>
        <end position="250"/>
    </location>
</feature>
<feature type="helix" evidence="14">
    <location>
        <begin position="254"/>
        <end position="268"/>
    </location>
</feature>
<feature type="helix" evidence="14">
    <location>
        <begin position="280"/>
        <end position="288"/>
    </location>
</feature>
<feature type="turn" evidence="14">
    <location>
        <begin position="295"/>
        <end position="297"/>
    </location>
</feature>
<feature type="helix" evidence="14">
    <location>
        <begin position="300"/>
        <end position="314"/>
    </location>
</feature>
<feature type="strand" evidence="14">
    <location>
        <begin position="317"/>
        <end position="319"/>
    </location>
</feature>
<feature type="strand" evidence="14">
    <location>
        <begin position="321"/>
        <end position="323"/>
    </location>
</feature>
<feature type="helix" evidence="14">
    <location>
        <begin position="325"/>
        <end position="356"/>
    </location>
</feature>
<feature type="helix" evidence="14">
    <location>
        <begin position="361"/>
        <end position="366"/>
    </location>
</feature>
<feature type="turn" evidence="14">
    <location>
        <begin position="371"/>
        <end position="373"/>
    </location>
</feature>
<feature type="strand" evidence="14">
    <location>
        <begin position="388"/>
        <end position="390"/>
    </location>
</feature>
<feature type="helix" evidence="14">
    <location>
        <begin position="403"/>
        <end position="419"/>
    </location>
</feature>
<feature type="turn" evidence="14">
    <location>
        <begin position="420"/>
        <end position="422"/>
    </location>
</feature>
<feature type="strand" evidence="14">
    <location>
        <begin position="436"/>
        <end position="440"/>
    </location>
</feature>
<feature type="strand" evidence="14">
    <location>
        <begin position="444"/>
        <end position="447"/>
    </location>
</feature>
<feature type="strand" evidence="14">
    <location>
        <begin position="449"/>
        <end position="453"/>
    </location>
</feature>
<feature type="helix" evidence="14">
    <location>
        <begin position="461"/>
        <end position="463"/>
    </location>
</feature>
<feature type="strand" evidence="14">
    <location>
        <begin position="466"/>
        <end position="468"/>
    </location>
</feature>
<feature type="strand" evidence="14">
    <location>
        <begin position="473"/>
        <end position="477"/>
    </location>
</feature>
<feature type="helix" evidence="14">
    <location>
        <begin position="479"/>
        <end position="492"/>
    </location>
</feature>
<feature type="helix" evidence="14">
    <location>
        <begin position="498"/>
        <end position="501"/>
    </location>
</feature>
<feature type="helix" evidence="14">
    <location>
        <begin position="504"/>
        <end position="507"/>
    </location>
</feature>
<feature type="helix" evidence="14">
    <location>
        <begin position="530"/>
        <end position="532"/>
    </location>
</feature>
<feature type="strand" evidence="12">
    <location>
        <begin position="538"/>
        <end position="541"/>
    </location>
</feature>
<feature type="strand" evidence="14">
    <location>
        <begin position="542"/>
        <end position="544"/>
    </location>
</feature>
<feature type="helix" evidence="14">
    <location>
        <begin position="552"/>
        <end position="565"/>
    </location>
</feature>
<feature type="helix" evidence="14">
    <location>
        <begin position="573"/>
        <end position="575"/>
    </location>
</feature>
<protein>
    <recommendedName>
        <fullName evidence="5">Vanadium chloroperoxidase</fullName>
        <ecNumber evidence="2">1.11.1.10</ecNumber>
    </recommendedName>
    <alternativeName>
        <fullName>Vanadium chloride peroxidase</fullName>
        <shortName>VCPO</shortName>
    </alternativeName>
</protein>
<evidence type="ECO:0000256" key="1">
    <source>
        <dbReference type="SAM" id="MobiDB-lite"/>
    </source>
</evidence>
<evidence type="ECO:0000269" key="2">
    <source>
    </source>
</evidence>
<evidence type="ECO:0000269" key="3">
    <source>
    </source>
</evidence>
<evidence type="ECO:0000269" key="4">
    <source>
    </source>
</evidence>
<evidence type="ECO:0000303" key="5">
    <source>
    </source>
</evidence>
<evidence type="ECO:0000305" key="6"/>
<evidence type="ECO:0000305" key="7">
    <source>
    </source>
</evidence>
<evidence type="ECO:0000305" key="8">
    <source>
    </source>
</evidence>
<evidence type="ECO:0007744" key="9">
    <source>
        <dbReference type="PDB" id="1IDQ"/>
    </source>
</evidence>
<evidence type="ECO:0007744" key="10">
    <source>
        <dbReference type="PDB" id="1IDU"/>
    </source>
</evidence>
<evidence type="ECO:0007744" key="11">
    <source>
        <dbReference type="PDB" id="1VNC"/>
    </source>
</evidence>
<evidence type="ECO:0007829" key="12">
    <source>
        <dbReference type="PDB" id="1IDQ"/>
    </source>
</evidence>
<evidence type="ECO:0007829" key="13">
    <source>
        <dbReference type="PDB" id="1VNS"/>
    </source>
</evidence>
<evidence type="ECO:0007829" key="14">
    <source>
        <dbReference type="PDB" id="3BB0"/>
    </source>
</evidence>
<comment type="function">
    <text evidence="2">Catalyzes the oxidation of chloride in the presence of hydrogen peroxide to hypochlorous acid (ClOH), which in turn can react with a nucleophilic acceptor (RH), to form a chlorinated compound.</text>
</comment>
<comment type="catalytic activity">
    <reaction evidence="2">
        <text>RH + Cl(-) + H2O2 = RCl + 2 H2O.</text>
        <dbReference type="EC" id="1.11.1.10"/>
    </reaction>
</comment>
<comment type="cofactor">
    <cofactor evidence="3 4 7">
        <name>vanadate</name>
        <dbReference type="ChEBI" id="CHEBI:35169"/>
    </cofactor>
</comment>
<comment type="subunit">
    <text evidence="2">Homotetramer.</text>
</comment>
<comment type="subcellular location">
    <subcellularLocation>
        <location evidence="2">Secreted</location>
    </subcellularLocation>
</comment>
<comment type="developmental stage">
    <text evidence="2">Expression takes place in the secondary-growth phase initiated by nutrient depletion.</text>
</comment>
<comment type="PTM">
    <text evidence="2">The N-terminus is blocked.</text>
</comment>
<comment type="similarity">
    <text evidence="6">Belongs to the vanadium-dependent haloperoxidase family.</text>
</comment>
<keyword id="KW-0002">3D-structure</keyword>
<keyword id="KW-0868">Chloride</keyword>
<keyword id="KW-0903">Direct protein sequencing</keyword>
<keyword id="KW-0479">Metal-binding</keyword>
<keyword id="KW-0560">Oxidoreductase</keyword>
<keyword id="KW-0575">Peroxidase</keyword>
<keyword id="KW-0964">Secreted</keyword>
<keyword id="KW-0837">Vanadium</keyword>
<reference key="1">
    <citation type="journal article" date="1995" name="Eur. J. Biochem.">
        <title>Primary structure and characterization of the vanadium chloroperoxidase from the fungus Curvularia inaequalis.</title>
        <authorList>
            <person name="Simons B.H."/>
            <person name="Barnett P."/>
            <person name="Vollenbroek E.G.M."/>
            <person name="Dekker H.L."/>
            <person name="Muijsers A.O."/>
            <person name="Messerschmidt A."/>
            <person name="Wever R."/>
        </authorList>
    </citation>
    <scope>NUCLEOTIDE SEQUENCE [MRNA]</scope>
    <scope>PARTIAL PROTEIN SEQUENCE</scope>
    <scope>FUNCTION</scope>
    <scope>CATALYTIC ACTIVITY</scope>
    <scope>COFACTOR</scope>
    <scope>SUBCELLULAR LOCATION</scope>
    <scope>DEVELOPMENTAL STAGE</scope>
    <scope>SUBUNIT</scope>
</reference>
<reference evidence="11" key="2">
    <citation type="journal article" date="1996" name="Proc. Natl. Acad. Sci. U.S.A.">
        <title>X-ray structure of a vanadium-containing enzyme: chloroperoxidase from the fungus Curvularia inaequalis.</title>
        <authorList>
            <person name="Messerschmidt A."/>
            <person name="Wever R."/>
        </authorList>
    </citation>
    <scope>X-RAY CRYSTALLOGRAPHY (2.1 ANGSTROMS) IN COMPLEX WITH VANADATE</scope>
    <scope>COFACTOR</scope>
    <scope>REACTION MECHANISM</scope>
    <scope>ACTIVE SITE</scope>
</reference>
<reference evidence="9 10" key="3">
    <citation type="journal article" date="1997" name="Biol. Chem.">
        <title>Implications for the catalytic mechanism of the vanadium-containing enzyme chloroperoxidase from the fungus Curvularia inaequalis by X-ray structures of the native and peroxide form.</title>
        <authorList>
            <person name="Messerschmidt A."/>
            <person name="Prade L."/>
            <person name="Wever R."/>
        </authorList>
    </citation>
    <scope>X-RAY CRYSTALLOGRAPHY (2.03 ANGSTROMS) IN COMPLEX WITH VANADATE</scope>
    <scope>COFACTOR</scope>
    <scope>REACTION MECHANISM</scope>
</reference>
<organism>
    <name type="scientific">Curvularia inaequalis</name>
    <name type="common">Helminthosporium inaequale</name>
    <dbReference type="NCBI Taxonomy" id="38902"/>
    <lineage>
        <taxon>Eukaryota</taxon>
        <taxon>Fungi</taxon>
        <taxon>Dikarya</taxon>
        <taxon>Ascomycota</taxon>
        <taxon>Pezizomycotina</taxon>
        <taxon>Dothideomycetes</taxon>
        <taxon>Pleosporomycetidae</taxon>
        <taxon>Pleosporales</taxon>
        <taxon>Pleosporineae</taxon>
        <taxon>Pleosporaceae</taxon>
        <taxon>Curvularia</taxon>
    </lineage>
</organism>
<gene>
    <name type="primary">CPO</name>
</gene>
<sequence>MGSVTPIPLPKIDEPEEYNTNYILFWNHVGLELNRVTHTVGGPLTGPPLSARALGMLHLAIHDAYFSICPPTDFTTFLSPDTENAAYRLPSPNGANDARQAVAGAALKMLSSLYMKPVEQPNPNPGANISDNAYAQLGLVLDRSVLEAPGGVDRESASFMFGEDVADVFFALLNDPRGASQEGYHPTPGRYKFDDEPTHPVVLIPVDPNNPNGPKMPFRQYHAPFYGKTTKRFATQSEHFLADPPGLRSNADETAEYDDAVRVAIAMGGAQALNSTKRSPWQTAQGLYWAYDGSNLIGTPPRFYNQIVRRIAVTYKKEEDLANSEVNNADFARLFALVDVACTDAGIFSWKEKWEFEFWRPLSGVRDDGRPDHGDPFWLTLGAPATNTNDIPFKPPFPAYPSGHATFGGAVFQMVRRYYNGRVGTWKDDEPDNIAIDMMISEELNGVNRDLRQPYDPTAPIEDQPGIVRTRIVRHFDSAWELMFENAISRIFLGVHWRFDAAAARDILIPTTTKDVYAVDNNGATVFQNVEDIRYTTRGTREDPEGLFPIGGVPLGIEIADEIFNNGLKPTPPEIQPMPQETPVQKPVGQQPVKGMWEEEQAPVVKEAP</sequence>